<name>MCA1A_NEOFI</name>
<comment type="function">
    <text evidence="1">Involved in cell death (apoptosis).</text>
</comment>
<comment type="similarity">
    <text evidence="4">Belongs to the peptidase C14B family.</text>
</comment>
<comment type="sequence caution" evidence="4">
    <conflict type="erroneous gene model prediction">
        <sequence resource="EMBL-CDS" id="EAW23097"/>
    </conflict>
</comment>
<evidence type="ECO:0000250" key="1"/>
<evidence type="ECO:0000255" key="2"/>
<evidence type="ECO:0000256" key="3">
    <source>
        <dbReference type="SAM" id="MobiDB-lite"/>
    </source>
</evidence>
<evidence type="ECO:0000305" key="4"/>
<accession>A1D3V4</accession>
<sequence>MQNHHHQQSSYGGGYPGQAYREQHPPPNPYGYGQPSPQPGYGAPPPHNGYATAVGIRPAAATYWKRGVQWKTAWYVIAFGAGRNASALESVKYAAADTCNTGMNQYQNPYSHGHQGGPPPPPTDPVAFGHGAPQGYSFQYSRCTGKRKALLIGINYFGQKGQLRGCINDVKNMSTYLNQNFGYAREDMVLLTDDQQNPMSQPTKANILRAMHWLVKDAQPNDSLFFHYSGHGGQTPDLDGDEEDGYDEVIYPVDFRQAGHIVDDEMHRIMVRPLRPGVRLTAIFDSCHSGSALDLPYIYSTQGILKEPNLAKEAGQGLLGVVSAYARGDMGGMVSTAVGFLKRATKGDEAYTRSKQTKTSPADVIMWSGSKDSQTSQDAQIAGQATGAMSWAFITALRKNPQQSYVQLLNSIRDELATKYSQKPQLSCSHPLGKH</sequence>
<gene>
    <name type="primary">casA</name>
    <name type="ORF">NFIA_017980</name>
</gene>
<reference key="1">
    <citation type="journal article" date="2008" name="PLoS Genet.">
        <title>Genomic islands in the pathogenic filamentous fungus Aspergillus fumigatus.</title>
        <authorList>
            <person name="Fedorova N.D."/>
            <person name="Khaldi N."/>
            <person name="Joardar V.S."/>
            <person name="Maiti R."/>
            <person name="Amedeo P."/>
            <person name="Anderson M.J."/>
            <person name="Crabtree J."/>
            <person name="Silva J.C."/>
            <person name="Badger J.H."/>
            <person name="Albarraq A."/>
            <person name="Angiuoli S."/>
            <person name="Bussey H."/>
            <person name="Bowyer P."/>
            <person name="Cotty P.J."/>
            <person name="Dyer P.S."/>
            <person name="Egan A."/>
            <person name="Galens K."/>
            <person name="Fraser-Liggett C.M."/>
            <person name="Haas B.J."/>
            <person name="Inman J.M."/>
            <person name="Kent R."/>
            <person name="Lemieux S."/>
            <person name="Malavazi I."/>
            <person name="Orvis J."/>
            <person name="Roemer T."/>
            <person name="Ronning C.M."/>
            <person name="Sundaram J.P."/>
            <person name="Sutton G."/>
            <person name="Turner G."/>
            <person name="Venter J.C."/>
            <person name="White O.R."/>
            <person name="Whitty B.R."/>
            <person name="Youngman P."/>
            <person name="Wolfe K.H."/>
            <person name="Goldman G.H."/>
            <person name="Wortman J.R."/>
            <person name="Jiang B."/>
            <person name="Denning D.W."/>
            <person name="Nierman W.C."/>
        </authorList>
    </citation>
    <scope>NUCLEOTIDE SEQUENCE [LARGE SCALE GENOMIC DNA]</scope>
    <source>
        <strain>ATCC 1020 / DSM 3700 / CBS 544.65 / FGSC A1164 / JCM 1740 / NRRL 181 / WB 181</strain>
    </source>
</reference>
<protein>
    <recommendedName>
        <fullName>Metacaspase-1A</fullName>
        <ecNumber>3.4.22.-</ecNumber>
    </recommendedName>
</protein>
<dbReference type="EC" id="3.4.22.-"/>
<dbReference type="EMBL" id="DS027688">
    <property type="protein sequence ID" value="EAW23097.1"/>
    <property type="status" value="ALT_SEQ"/>
    <property type="molecule type" value="Genomic_DNA"/>
</dbReference>
<dbReference type="RefSeq" id="XP_001264994.1">
    <property type="nucleotide sequence ID" value="XM_001264993.1"/>
</dbReference>
<dbReference type="SMR" id="A1D3V4"/>
<dbReference type="STRING" id="331117.A1D3V4"/>
<dbReference type="EnsemblFungi" id="EAW23097">
    <property type="protein sequence ID" value="EAW23097"/>
    <property type="gene ID" value="NFIA_017980"/>
</dbReference>
<dbReference type="GeneID" id="4591316"/>
<dbReference type="KEGG" id="nfi:NFIA_017980"/>
<dbReference type="VEuPathDB" id="FungiDB:NFIA_017980"/>
<dbReference type="eggNOG" id="KOG1546">
    <property type="taxonomic scope" value="Eukaryota"/>
</dbReference>
<dbReference type="OrthoDB" id="3223806at2759"/>
<dbReference type="Proteomes" id="UP000006702">
    <property type="component" value="Unassembled WGS sequence"/>
</dbReference>
<dbReference type="GO" id="GO:0005737">
    <property type="term" value="C:cytoplasm"/>
    <property type="evidence" value="ECO:0007669"/>
    <property type="project" value="TreeGrafter"/>
</dbReference>
<dbReference type="GO" id="GO:0004197">
    <property type="term" value="F:cysteine-type endopeptidase activity"/>
    <property type="evidence" value="ECO:0007669"/>
    <property type="project" value="InterPro"/>
</dbReference>
<dbReference type="GO" id="GO:0006915">
    <property type="term" value="P:apoptotic process"/>
    <property type="evidence" value="ECO:0007669"/>
    <property type="project" value="UniProtKB-KW"/>
</dbReference>
<dbReference type="GO" id="GO:0006508">
    <property type="term" value="P:proteolysis"/>
    <property type="evidence" value="ECO:0007669"/>
    <property type="project" value="UniProtKB-KW"/>
</dbReference>
<dbReference type="Gene3D" id="3.40.50.12660">
    <property type="match status" value="1"/>
</dbReference>
<dbReference type="InterPro" id="IPR029030">
    <property type="entry name" value="Caspase-like_dom_sf"/>
</dbReference>
<dbReference type="InterPro" id="IPR050452">
    <property type="entry name" value="Metacaspase"/>
</dbReference>
<dbReference type="InterPro" id="IPR011600">
    <property type="entry name" value="Pept_C14_caspase"/>
</dbReference>
<dbReference type="PANTHER" id="PTHR48104:SF30">
    <property type="entry name" value="METACASPASE-1"/>
    <property type="match status" value="1"/>
</dbReference>
<dbReference type="PANTHER" id="PTHR48104">
    <property type="entry name" value="METACASPASE-4"/>
    <property type="match status" value="1"/>
</dbReference>
<dbReference type="Pfam" id="PF00656">
    <property type="entry name" value="Peptidase_C14"/>
    <property type="match status" value="1"/>
</dbReference>
<dbReference type="SUPFAM" id="SSF52129">
    <property type="entry name" value="Caspase-like"/>
    <property type="match status" value="1"/>
</dbReference>
<proteinExistence type="inferred from homology"/>
<keyword id="KW-0053">Apoptosis</keyword>
<keyword id="KW-0378">Hydrolase</keyword>
<keyword id="KW-0645">Protease</keyword>
<keyword id="KW-1185">Reference proteome</keyword>
<keyword id="KW-0788">Thiol protease</keyword>
<keyword id="KW-0865">Zymogen</keyword>
<organism>
    <name type="scientific">Neosartorya fischeri (strain ATCC 1020 / DSM 3700 / CBS 544.65 / FGSC A1164 / JCM 1740 / NRRL 181 / WB 181)</name>
    <name type="common">Aspergillus fischerianus</name>
    <dbReference type="NCBI Taxonomy" id="331117"/>
    <lineage>
        <taxon>Eukaryota</taxon>
        <taxon>Fungi</taxon>
        <taxon>Dikarya</taxon>
        <taxon>Ascomycota</taxon>
        <taxon>Pezizomycotina</taxon>
        <taxon>Eurotiomycetes</taxon>
        <taxon>Eurotiomycetidae</taxon>
        <taxon>Eurotiales</taxon>
        <taxon>Aspergillaceae</taxon>
        <taxon>Aspergillus</taxon>
        <taxon>Aspergillus subgen. Fumigati</taxon>
    </lineage>
</organism>
<feature type="propeptide" id="PRO_0000333656" evidence="2">
    <location>
        <begin position="1"/>
        <end status="unknown"/>
    </location>
</feature>
<feature type="chain" id="PRO_0000333657" description="Metacaspase-1A">
    <location>
        <begin status="unknown"/>
        <end position="435"/>
    </location>
</feature>
<feature type="region of interest" description="Disordered" evidence="3">
    <location>
        <begin position="1"/>
        <end position="46"/>
    </location>
</feature>
<feature type="region of interest" description="Disordered" evidence="3">
    <location>
        <begin position="106"/>
        <end position="129"/>
    </location>
</feature>
<feature type="compositionally biased region" description="Pro residues" evidence="3">
    <location>
        <begin position="36"/>
        <end position="46"/>
    </location>
</feature>
<feature type="active site" evidence="1">
    <location>
        <position position="231"/>
    </location>
</feature>
<feature type="active site" evidence="1">
    <location>
        <position position="287"/>
    </location>
</feature>